<dbReference type="EMBL" id="Z67753">
    <property type="protein sequence ID" value="CAA91708.1"/>
    <property type="molecule type" value="Genomic_DNA"/>
</dbReference>
<dbReference type="PIR" id="S78335">
    <property type="entry name" value="S78335"/>
</dbReference>
<dbReference type="RefSeq" id="NP_043676.1">
    <property type="nucleotide sequence ID" value="NC_001713.1"/>
</dbReference>
<dbReference type="SMR" id="P49524"/>
<dbReference type="GeneID" id="801729"/>
<dbReference type="GO" id="GO:0009535">
    <property type="term" value="C:chloroplast thylakoid membrane"/>
    <property type="evidence" value="ECO:0007669"/>
    <property type="project" value="UniProtKB-SubCell"/>
</dbReference>
<dbReference type="GO" id="GO:0009512">
    <property type="term" value="C:cytochrome b6f complex"/>
    <property type="evidence" value="ECO:0007669"/>
    <property type="project" value="InterPro"/>
</dbReference>
<dbReference type="GO" id="GO:0045158">
    <property type="term" value="F:electron transporter, transferring electrons within cytochrome b6/f complex of photosystem II activity"/>
    <property type="evidence" value="ECO:0007669"/>
    <property type="project" value="UniProtKB-UniRule"/>
</dbReference>
<dbReference type="GO" id="GO:0015979">
    <property type="term" value="P:photosynthesis"/>
    <property type="evidence" value="ECO:0007669"/>
    <property type="project" value="UniProtKB-KW"/>
</dbReference>
<dbReference type="HAMAP" id="MF_00433">
    <property type="entry name" value="Cytb6_f_PetL"/>
    <property type="match status" value="1"/>
</dbReference>
<dbReference type="InterPro" id="IPR007802">
    <property type="entry name" value="Cyt_b6/f_cplx_su6"/>
</dbReference>
<dbReference type="Pfam" id="PF05115">
    <property type="entry name" value="PetL"/>
    <property type="match status" value="1"/>
</dbReference>
<comment type="function">
    <text evidence="1">Component of the cytochrome b6-f complex, which mediates electron transfer between photosystem II (PSII) and photosystem I (PSI), cyclic electron flow around PSI, and state transitions. PetL is important for photoautotrophic growth as well as for electron transfer efficiency and stability of the cytochrome b6-f complex.</text>
</comment>
<comment type="subunit">
    <text evidence="1">The 4 large subunits of the cytochrome b6-f complex are cytochrome b6, subunit IV (17 kDa polypeptide, PetD), cytochrome f and the Rieske protein, while the 4 small subunits are PetG, PetL, PetM and PetN. The complex functions as a dimer.</text>
</comment>
<comment type="subcellular location">
    <subcellularLocation>
        <location evidence="1">Plastid</location>
        <location evidence="1">Chloroplast thylakoid membrane</location>
        <topology evidence="1">Single-pass membrane protein</topology>
    </subcellularLocation>
</comment>
<comment type="similarity">
    <text evidence="1">Belongs to the PetL family.</text>
</comment>
<name>PETL_TRICV</name>
<sequence>MTIAIDYFLLVGFCFAFTSGLYLGLKSIKLI</sequence>
<geneLocation type="chloroplast"/>
<keyword id="KW-0150">Chloroplast</keyword>
<keyword id="KW-0249">Electron transport</keyword>
<keyword id="KW-0472">Membrane</keyword>
<keyword id="KW-0602">Photosynthesis</keyword>
<keyword id="KW-0934">Plastid</keyword>
<keyword id="KW-0793">Thylakoid</keyword>
<keyword id="KW-0812">Transmembrane</keyword>
<keyword id="KW-1133">Transmembrane helix</keyword>
<keyword id="KW-0813">Transport</keyword>
<evidence type="ECO:0000255" key="1">
    <source>
        <dbReference type="HAMAP-Rule" id="MF_00433"/>
    </source>
</evidence>
<protein>
    <recommendedName>
        <fullName evidence="1">Cytochrome b6-f complex subunit 6</fullName>
    </recommendedName>
    <alternativeName>
        <fullName evidence="1">Cytochrome b6-f complex subunit PetL</fullName>
    </alternativeName>
    <alternativeName>
        <fullName evidence="1">Cytochrome b6-f complex subunit VI</fullName>
    </alternativeName>
</protein>
<proteinExistence type="inferred from homology"/>
<reference key="1">
    <citation type="journal article" date="1995" name="Plant Mol. Biol. Rep.">
        <title>The chloroplast genome of a chlorophyll a+c-containing alga, Odontella sinensis.</title>
        <authorList>
            <person name="Kowallik K.V."/>
            <person name="Stoebe B."/>
            <person name="Schaffran I."/>
            <person name="Kroth-Pancic P."/>
            <person name="Freier U."/>
        </authorList>
    </citation>
    <scope>NUCLEOTIDE SEQUENCE [LARGE SCALE GENOMIC DNA]</scope>
</reference>
<organism>
    <name type="scientific">Trieres chinensis</name>
    <name type="common">Marine centric diatom</name>
    <name type="synonym">Odontella sinensis</name>
    <dbReference type="NCBI Taxonomy" id="1514140"/>
    <lineage>
        <taxon>Eukaryota</taxon>
        <taxon>Sar</taxon>
        <taxon>Stramenopiles</taxon>
        <taxon>Ochrophyta</taxon>
        <taxon>Bacillariophyta</taxon>
        <taxon>Mediophyceae</taxon>
        <taxon>Biddulphiophycidae</taxon>
        <taxon>Eupodiscales</taxon>
        <taxon>Parodontellaceae</taxon>
        <taxon>Trieres</taxon>
    </lineage>
</organism>
<gene>
    <name evidence="1" type="primary">petL</name>
</gene>
<feature type="chain" id="PRO_0000220461" description="Cytochrome b6-f complex subunit 6">
    <location>
        <begin position="1"/>
        <end position="31"/>
    </location>
</feature>
<feature type="transmembrane region" description="Helical" evidence="1">
    <location>
        <begin position="3"/>
        <end position="23"/>
    </location>
</feature>
<accession>P49524</accession>